<keyword id="KW-0053">Apoptosis</keyword>
<keyword id="KW-0068">Autocatalytic cleavage</keyword>
<keyword id="KW-0963">Cytoplasm</keyword>
<keyword id="KW-0378">Hydrolase</keyword>
<keyword id="KW-0472">Membrane</keyword>
<keyword id="KW-0496">Mitochondrion</keyword>
<keyword id="KW-0539">Nucleus</keyword>
<keyword id="KW-0645">Protease</keyword>
<keyword id="KW-1185">Reference proteome</keyword>
<keyword id="KW-0770">Synapse</keyword>
<keyword id="KW-0788">Thiol protease</keyword>
<keyword id="KW-0865">Zymogen</keyword>
<comment type="function">
    <text evidence="2">Acts as a cysteine protease in controlling programmed cell death (apoptosis) by proteolytically activating or inactivating a wide range of substrates. Component of the egl-1, ced-9, ced-4 and ced-3 apoptotic signaling cascade required for the initiation of programmed cell death in cells fated to die during embryonic and postembryonic development. During oogenesis, required for germline apoptosis downstream of ced-9 and ced-4 but independently of egl-1. By cleaving and activating ced-8, promotes phosphatidylserine exposure on the surface of apoptotic cells; phosphatidylserine is a specific marker only present at the surface of apoptotic cells and acts as a specific signal for engulfment. By cleaving and converting dcr-1 into a deoxyribonuclease (DNase), promotes apoptotic chromosomal DNA fragmentation. By cleaving mitochondrial fission protein drp-1, may regulate the removal of mitochondria during apoptosis. During germline apoptosis, cleaves translation initiation factor ifg-1 (isoform p170) promoting cap-independent translation. During male tail morphogenesis, promotes apoptosis of the tail-spike cell downstream of ced-4 but independently of egl-1 and ced-9. By cleaving cnt-1, prevents the activation of the prosurvival akt-1/2 signaling pathway and thus promotes apoptosis. Downstream of ced-4, may play a role in sex-specific cell apoptosis by cleaving sex-determining protein fem-1. May regulate germline apoptosis in response to DNA damage, probably downstream of let-60/ras and mpk-1 pathway. Cleaves ced-9 in vitro. Cleaves csp-2 isoform b resulting in the removal of the propeptide and the generation of csp-2 subunit p31 in vitro. Independently of its apoptotic role has additional functions. Probably by cleaving and thereby activating actin-severing protein gsnl-1, required for the elimination of transient presynaptic components during larval development downstream of egl-1, ced-9 and ced-4 pathway. Together with ain-1, a component of the miRNA-induced-silencing complex (miRISC), regulates temporal cell fate patterning during larval development. Acts in cell fate patterning by cleaving heterochronic protein lin-28, likely promoting its degradation. Also cleaves heterochronic protein lin-14 and exonuclease disl-2 in vitro. Downstream of calreticulin crt-1 and ced-4 and independently of egl-1 and ced-9, plays a role in the initial steps of axonal regrowth following axotomy. Cleaves 14-3-3-like protein ftt-2, tubulin tbb-2 and calreticulin crt-1 in vitro. Plays also a role in resistance to S.typhimurium-mediated infection.</text>
</comment>
<comment type="catalytic activity">
    <reaction evidence="2">
        <text>Strict requirement for an Asp residue at position P1 and has a preferred cleavage sequence of Asp-Glu-Val-Asp-|-.</text>
        <dbReference type="EC" id="3.4.22.60"/>
    </reaction>
</comment>
<comment type="activity regulation">
    <text evidence="2">Octameric ced-4 activates zymogen autoprocessing and enhances activity of processed ced-3. Zymogen autoactivation is inhibited by csp-3. csp-3 has no effect on active ced-3. Zymogen autoactivation is inhibited by csp-2. Inhibited by cysteine protease inhibitor iodoacetic acid (CH3COOI). Inhibited by benzyloxycarbonyl-DEVD-fluoro-methyl ketone (zDEVD-fmk). Inhibited by benzyloxycarbonyl-VAD-fluoro-methyl ketone (zVAD-fmk). Not inhibited by N-[N-(L-3-transcarboxirane-2-carbonyl)-leucyl]-agmatine (E-64) or by the serine and cysteine protease inhibitor L-1-chloro-3-[4-to-osylamido]-7-amino-2-heptanone (TLCK).</text>
</comment>
<comment type="subunit">
    <text evidence="2">The active form is probably a heterodimer of the p17 subunit with either the p15 or p13 subunit which are all derived from the precursor by autocatalysis. Interacts with octameric ced-4 (two ced-3 zymogens per one ced-4 octamer); the interaction causes the autoproteolytic cleavage and activation of ced-3. Processed ced-3 also interacts with ced-4 octamer to form a stable holoenzyme. Interacts (via large subunit p17) with csp-3; the interaction prevents ced-3 autoactivation and delays ced-4-induced ced-3 processing. Interacts (via large subunit p17 or small subunit p13 or p15) with csp-2; the interaction inhibits ced-3 autoactivation. Interacts (via propeptide) with nucleoporin npp-14; the interaction tethers ced-3 to the nuclear membrane and prevents its autoprocessing in absence of ced-4. Interacts with dct-1. May form a complex composed of ced-3, ced-4 and mac-1.</text>
</comment>
<comment type="subcellular location">
    <subcellularLocation>
        <location evidence="2">Nucleus membrane</location>
    </subcellularLocation>
    <subcellularLocation>
        <location evidence="2">Perikaryon</location>
    </subcellularLocation>
    <subcellularLocation>
        <location evidence="2">Synapse</location>
    </subcellularLocation>
    <subcellularLocation>
        <location evidence="2">Mitochondrion</location>
    </subcellularLocation>
    <subcellularLocation>
        <location evidence="2">Cytoplasm</location>
    </subcellularLocation>
    <subcellularLocation>
        <location evidence="2">Cytoplasm</location>
        <location evidence="2">Perinuclear region</location>
    </subcellularLocation>
    <text evidence="2">Colocalizes with nucleoporin npp-14 to the perinuclear region in germ cells. Becomes diffused in the cytoplasm in apoptotic germ cells. Localizes to axonal mitochondria and synapses of DD motor neurons. Synaptic localization is dependent on axonal mitochondria.</text>
</comment>
<comment type="domain">
    <text evidence="2">The CARD domain is involved in ced-4 binding.</text>
</comment>
<comment type="PTM">
    <text evidence="2">Autocatalytic cleavage removes the propeptide and generates the catalytic subunit p17 and two non-catalytic subunits p15 and p13; autoproteolysis is induced by ced-4 oligomer. Cleaved by caspase csp-1 probably at Asp-146 and Asp-376.</text>
</comment>
<comment type="similarity">
    <text evidence="5">Belongs to the peptidase C14A family.</text>
</comment>
<accession>P45436</accession>
<accession>E3M6B9</accession>
<gene>
    <name evidence="6" type="primary">ced-3</name>
    <name evidence="6" type="ORF">CRE_10123</name>
</gene>
<dbReference type="EC" id="3.4.22.60" evidence="2"/>
<dbReference type="EMBL" id="DS268426">
    <property type="protein sequence ID" value="EFO93085.1"/>
    <property type="molecule type" value="Genomic_DNA"/>
</dbReference>
<dbReference type="RefSeq" id="XP_003108285.1">
    <property type="nucleotide sequence ID" value="XM_003108237.1"/>
</dbReference>
<dbReference type="SMR" id="P45436"/>
<dbReference type="STRING" id="31234.P45436"/>
<dbReference type="MEROPS" id="C14.002"/>
<dbReference type="EnsemblMetazoa" id="CRE10123.1">
    <property type="protein sequence ID" value="CRE10123.1"/>
    <property type="gene ID" value="WBGene00062743"/>
</dbReference>
<dbReference type="GeneID" id="9828818"/>
<dbReference type="KEGG" id="crq:GCK72_014511"/>
<dbReference type="CTD" id="9828818"/>
<dbReference type="eggNOG" id="KOG3573">
    <property type="taxonomic scope" value="Eukaryota"/>
</dbReference>
<dbReference type="HOGENOM" id="CLU_036904_5_2_1"/>
<dbReference type="OMA" id="GYTVICK"/>
<dbReference type="OrthoDB" id="6114029at2759"/>
<dbReference type="Proteomes" id="UP000008281">
    <property type="component" value="Unassembled WGS sequence"/>
</dbReference>
<dbReference type="GO" id="GO:0008303">
    <property type="term" value="C:caspase complex"/>
    <property type="evidence" value="ECO:0007669"/>
    <property type="project" value="EnsemblMetazoa"/>
</dbReference>
<dbReference type="GO" id="GO:0005739">
    <property type="term" value="C:mitochondrion"/>
    <property type="evidence" value="ECO:0007669"/>
    <property type="project" value="UniProtKB-SubCell"/>
</dbReference>
<dbReference type="GO" id="GO:0031965">
    <property type="term" value="C:nuclear membrane"/>
    <property type="evidence" value="ECO:0007669"/>
    <property type="project" value="UniProtKB-SubCell"/>
</dbReference>
<dbReference type="GO" id="GO:0043204">
    <property type="term" value="C:perikaryon"/>
    <property type="evidence" value="ECO:0007669"/>
    <property type="project" value="UniProtKB-SubCell"/>
</dbReference>
<dbReference type="GO" id="GO:0048471">
    <property type="term" value="C:perinuclear region of cytoplasm"/>
    <property type="evidence" value="ECO:0007669"/>
    <property type="project" value="UniProtKB-SubCell"/>
</dbReference>
<dbReference type="GO" id="GO:0098793">
    <property type="term" value="C:presynapse"/>
    <property type="evidence" value="ECO:0007669"/>
    <property type="project" value="EnsemblMetazoa"/>
</dbReference>
<dbReference type="GO" id="GO:0140608">
    <property type="term" value="F:cysteine-type endopeptidase activator activity"/>
    <property type="evidence" value="ECO:0007669"/>
    <property type="project" value="EnsemblMetazoa"/>
</dbReference>
<dbReference type="GO" id="GO:0008656">
    <property type="term" value="F:cysteine-type endopeptidase activator activity involved in apoptotic process"/>
    <property type="evidence" value="ECO:0007669"/>
    <property type="project" value="EnsemblMetazoa"/>
</dbReference>
<dbReference type="GO" id="GO:0004197">
    <property type="term" value="F:cysteine-type endopeptidase activity"/>
    <property type="evidence" value="ECO:0007669"/>
    <property type="project" value="EnsemblMetazoa"/>
</dbReference>
<dbReference type="GO" id="GO:0042802">
    <property type="term" value="F:identical protein binding"/>
    <property type="evidence" value="ECO:0007669"/>
    <property type="project" value="EnsemblMetazoa"/>
</dbReference>
<dbReference type="GO" id="GO:0030042">
    <property type="term" value="P:actin filament depolymerization"/>
    <property type="evidence" value="ECO:0007669"/>
    <property type="project" value="EnsemblMetazoa"/>
</dbReference>
<dbReference type="GO" id="GO:1902742">
    <property type="term" value="P:apoptotic process involved in development"/>
    <property type="evidence" value="ECO:0007669"/>
    <property type="project" value="EnsemblMetazoa"/>
</dbReference>
<dbReference type="GO" id="GO:0050829">
    <property type="term" value="P:defense response to Gram-negative bacterium"/>
    <property type="evidence" value="ECO:0007669"/>
    <property type="project" value="EnsemblMetazoa"/>
</dbReference>
<dbReference type="GO" id="GO:0009792">
    <property type="term" value="P:embryo development ending in birth or egg hatching"/>
    <property type="evidence" value="ECO:0007669"/>
    <property type="project" value="EnsemblMetazoa"/>
</dbReference>
<dbReference type="GO" id="GO:0097194">
    <property type="term" value="P:execution phase of apoptosis"/>
    <property type="evidence" value="ECO:0007669"/>
    <property type="project" value="EnsemblMetazoa"/>
</dbReference>
<dbReference type="GO" id="GO:0046716">
    <property type="term" value="P:muscle cell cellular homeostasis"/>
    <property type="evidence" value="ECO:0007669"/>
    <property type="project" value="EnsemblMetazoa"/>
</dbReference>
<dbReference type="GO" id="GO:1905803">
    <property type="term" value="P:negative regulation of cellular response to manganese ion"/>
    <property type="evidence" value="ECO:0007669"/>
    <property type="project" value="EnsemblMetazoa"/>
</dbReference>
<dbReference type="GO" id="GO:1900118">
    <property type="term" value="P:negative regulation of execution phase of apoptosis"/>
    <property type="evidence" value="ECO:0007669"/>
    <property type="project" value="EnsemblMetazoa"/>
</dbReference>
<dbReference type="GO" id="GO:1904747">
    <property type="term" value="P:positive regulation of apoptotic process involved in development"/>
    <property type="evidence" value="ECO:0007669"/>
    <property type="project" value="EnsemblMetazoa"/>
</dbReference>
<dbReference type="GO" id="GO:1905845">
    <property type="term" value="P:positive regulation of cellular response to gamma radiation"/>
    <property type="evidence" value="ECO:0007669"/>
    <property type="project" value="EnsemblMetazoa"/>
</dbReference>
<dbReference type="GO" id="GO:0043525">
    <property type="term" value="P:positive regulation of neuron apoptotic process"/>
    <property type="evidence" value="ECO:0007669"/>
    <property type="project" value="EnsemblMetazoa"/>
</dbReference>
<dbReference type="GO" id="GO:0010954">
    <property type="term" value="P:positive regulation of protein processing"/>
    <property type="evidence" value="ECO:0007669"/>
    <property type="project" value="EnsemblMetazoa"/>
</dbReference>
<dbReference type="GO" id="GO:1905808">
    <property type="term" value="P:positive regulation of synapse pruning"/>
    <property type="evidence" value="ECO:0007669"/>
    <property type="project" value="EnsemblMetazoa"/>
</dbReference>
<dbReference type="GO" id="GO:0016540">
    <property type="term" value="P:protein autoprocessing"/>
    <property type="evidence" value="ECO:0007669"/>
    <property type="project" value="EnsemblMetazoa"/>
</dbReference>
<dbReference type="GO" id="GO:0030163">
    <property type="term" value="P:protein catabolic process"/>
    <property type="evidence" value="ECO:0007669"/>
    <property type="project" value="EnsemblMetazoa"/>
</dbReference>
<dbReference type="GO" id="GO:0030155">
    <property type="term" value="P:regulation of cell adhesion"/>
    <property type="evidence" value="ECO:0007669"/>
    <property type="project" value="EnsemblMetazoa"/>
</dbReference>
<dbReference type="GO" id="GO:0042659">
    <property type="term" value="P:regulation of cell fate specification"/>
    <property type="evidence" value="ECO:0007669"/>
    <property type="project" value="EnsemblMetazoa"/>
</dbReference>
<dbReference type="GO" id="GO:0040034">
    <property type="term" value="P:regulation of development, heterochronic"/>
    <property type="evidence" value="ECO:0007669"/>
    <property type="project" value="EnsemblMetazoa"/>
</dbReference>
<dbReference type="GO" id="GO:0040012">
    <property type="term" value="P:regulation of locomotion"/>
    <property type="evidence" value="ECO:0007669"/>
    <property type="project" value="EnsemblMetazoa"/>
</dbReference>
<dbReference type="GO" id="GO:0031647">
    <property type="term" value="P:regulation of protein stability"/>
    <property type="evidence" value="ECO:0007669"/>
    <property type="project" value="EnsemblMetazoa"/>
</dbReference>
<dbReference type="GO" id="GO:0040028">
    <property type="term" value="P:regulation of vulval development"/>
    <property type="evidence" value="ECO:0007669"/>
    <property type="project" value="EnsemblMetazoa"/>
</dbReference>
<dbReference type="CDD" id="cd01671">
    <property type="entry name" value="CARD"/>
    <property type="match status" value="1"/>
</dbReference>
<dbReference type="CDD" id="cd00032">
    <property type="entry name" value="CASc"/>
    <property type="match status" value="1"/>
</dbReference>
<dbReference type="Gene3D" id="3.40.50.1460">
    <property type="match status" value="1"/>
</dbReference>
<dbReference type="Gene3D" id="1.10.533.10">
    <property type="entry name" value="Death Domain, Fas"/>
    <property type="match status" value="1"/>
</dbReference>
<dbReference type="InterPro" id="IPR001315">
    <property type="entry name" value="CARD"/>
</dbReference>
<dbReference type="InterPro" id="IPR029030">
    <property type="entry name" value="Caspase-like_dom_sf"/>
</dbReference>
<dbReference type="InterPro" id="IPR033139">
    <property type="entry name" value="Caspase_cys_AS"/>
</dbReference>
<dbReference type="InterPro" id="IPR016129">
    <property type="entry name" value="Caspase_his_AS"/>
</dbReference>
<dbReference type="InterPro" id="IPR011029">
    <property type="entry name" value="DEATH-like_dom_sf"/>
</dbReference>
<dbReference type="InterPro" id="IPR002398">
    <property type="entry name" value="Pept_C14"/>
</dbReference>
<dbReference type="InterPro" id="IPR011600">
    <property type="entry name" value="Pept_C14_caspase"/>
</dbReference>
<dbReference type="InterPro" id="IPR002138">
    <property type="entry name" value="Pept_C14_p10"/>
</dbReference>
<dbReference type="InterPro" id="IPR001309">
    <property type="entry name" value="Pept_C14_p20"/>
</dbReference>
<dbReference type="InterPro" id="IPR015917">
    <property type="entry name" value="Pept_C14A"/>
</dbReference>
<dbReference type="PANTHER" id="PTHR47901">
    <property type="entry name" value="CASPASE RECRUITMENT DOMAIN-CONTAINING PROTEIN 18"/>
    <property type="match status" value="1"/>
</dbReference>
<dbReference type="PANTHER" id="PTHR47901:SF8">
    <property type="entry name" value="CASPASE-3"/>
    <property type="match status" value="1"/>
</dbReference>
<dbReference type="Pfam" id="PF00619">
    <property type="entry name" value="CARD"/>
    <property type="match status" value="1"/>
</dbReference>
<dbReference type="Pfam" id="PF00656">
    <property type="entry name" value="Peptidase_C14"/>
    <property type="match status" value="1"/>
</dbReference>
<dbReference type="PIRSF" id="PIRSF038001">
    <property type="entry name" value="Caspase_ICE"/>
    <property type="match status" value="1"/>
</dbReference>
<dbReference type="PRINTS" id="PR00376">
    <property type="entry name" value="IL1BCENZYME"/>
</dbReference>
<dbReference type="SMART" id="SM00114">
    <property type="entry name" value="CARD"/>
    <property type="match status" value="1"/>
</dbReference>
<dbReference type="SMART" id="SM00115">
    <property type="entry name" value="CASc"/>
    <property type="match status" value="1"/>
</dbReference>
<dbReference type="SUPFAM" id="SSF52129">
    <property type="entry name" value="Caspase-like"/>
    <property type="match status" value="1"/>
</dbReference>
<dbReference type="SUPFAM" id="SSF47986">
    <property type="entry name" value="DEATH domain"/>
    <property type="match status" value="1"/>
</dbReference>
<dbReference type="PROSITE" id="PS50209">
    <property type="entry name" value="CARD"/>
    <property type="match status" value="1"/>
</dbReference>
<dbReference type="PROSITE" id="PS01122">
    <property type="entry name" value="CASPASE_CYS"/>
    <property type="match status" value="1"/>
</dbReference>
<dbReference type="PROSITE" id="PS01121">
    <property type="entry name" value="CASPASE_HIS"/>
    <property type="match status" value="1"/>
</dbReference>
<dbReference type="PROSITE" id="PS50207">
    <property type="entry name" value="CASPASE_P10"/>
    <property type="match status" value="1"/>
</dbReference>
<dbReference type="PROSITE" id="PS50208">
    <property type="entry name" value="CASPASE_P20"/>
    <property type="match status" value="1"/>
</dbReference>
<evidence type="ECO:0000250" key="1">
    <source>
        <dbReference type="UniProtKB" id="P29466"/>
    </source>
</evidence>
<evidence type="ECO:0000250" key="2">
    <source>
        <dbReference type="UniProtKB" id="P42573"/>
    </source>
</evidence>
<evidence type="ECO:0000255" key="3">
    <source>
        <dbReference type="PROSITE-ProRule" id="PRU00046"/>
    </source>
</evidence>
<evidence type="ECO:0000256" key="4">
    <source>
        <dbReference type="SAM" id="MobiDB-lite"/>
    </source>
</evidence>
<evidence type="ECO:0000305" key="5"/>
<evidence type="ECO:0000312" key="6">
    <source>
        <dbReference type="EMBL" id="EFO93085.1"/>
    </source>
</evidence>
<proteinExistence type="inferred from homology"/>
<feature type="propeptide" id="PRO_0000441119" evidence="2">
    <location>
        <begin position="1"/>
        <end position="223"/>
    </location>
</feature>
<feature type="chain" id="PRO_0000004676" description="Cell death protein 3 subunit p17" evidence="5">
    <location>
        <begin position="224"/>
        <end position="376"/>
    </location>
</feature>
<feature type="chain" id="PRO_0000004677" description="Cell death protein 3 subunit p15" evidence="5">
    <location>
        <begin position="377"/>
        <end position="508"/>
    </location>
</feature>
<feature type="chain" id="PRO_0000441120" description="Cell death protein 3 subunit p13" evidence="5">
    <location>
        <begin position="392"/>
        <end position="508"/>
    </location>
</feature>
<feature type="domain" description="CARD" evidence="3">
    <location>
        <begin position="2"/>
        <end position="91"/>
    </location>
</feature>
<feature type="region of interest" description="Disordered" evidence="4">
    <location>
        <begin position="106"/>
        <end position="130"/>
    </location>
</feature>
<feature type="region of interest" description="Disordered" evidence="4">
    <location>
        <begin position="148"/>
        <end position="184"/>
    </location>
</feature>
<feature type="region of interest" description="Required for interaction with ced-4" evidence="2">
    <location>
        <begin position="392"/>
        <end position="407"/>
    </location>
</feature>
<feature type="compositionally biased region" description="Polar residues" evidence="4">
    <location>
        <begin position="118"/>
        <end position="127"/>
    </location>
</feature>
<feature type="compositionally biased region" description="Low complexity" evidence="4">
    <location>
        <begin position="171"/>
        <end position="184"/>
    </location>
</feature>
<feature type="active site" evidence="1">
    <location>
        <position position="317"/>
    </location>
</feature>
<feature type="active site" evidence="2">
    <location>
        <position position="360"/>
    </location>
</feature>
<feature type="site" description="Cleavage; by autolysis" evidence="2">
    <location>
        <begin position="223"/>
        <end position="224"/>
    </location>
</feature>
<feature type="site" description="Cleavage; by autolysis" evidence="2">
    <location>
        <begin position="376"/>
        <end position="377"/>
    </location>
</feature>
<feature type="site" description="Cleavage; by autolysis" evidence="2">
    <location>
        <begin position="391"/>
        <end position="392"/>
    </location>
</feature>
<name>CED3_CAERE</name>
<reference key="1">
    <citation type="submission" date="2007-07" db="EMBL/GenBank/DDBJ databases">
        <title>PCAP assembly of the Caenorhabditis remanei genome.</title>
        <authorList>
            <consortium name="Caenorhabditis remanei Sequencing Consortium"/>
            <person name="Wilson R.K."/>
        </authorList>
    </citation>
    <scope>NUCLEOTIDE SEQUENCE [LARGE SCALE GENOMIC DNA]</scope>
    <source>
        <strain>PB4641</strain>
    </source>
</reference>
<protein>
    <recommendedName>
        <fullName>Cell death protein 3</fullName>
        <ecNumber evidence="2">3.4.22.60</ecNumber>
    </recommendedName>
    <alternativeName>
        <fullName evidence="5">Caspase ced-3</fullName>
    </alternativeName>
    <component>
        <recommendedName>
            <fullName evidence="2">Cell death protein 3 subunit p17</fullName>
        </recommendedName>
    </component>
    <component>
        <recommendedName>
            <fullName evidence="2">Cell death protein 3 subunit p15</fullName>
        </recommendedName>
    </component>
    <component>
        <recommendedName>
            <fullName evidence="2">Cell death protein 3 subunit p13</fullName>
        </recommendedName>
    </component>
</protein>
<organism>
    <name type="scientific">Caenorhabditis remanei</name>
    <name type="common">Caenorhabditis vulgaris</name>
    <dbReference type="NCBI Taxonomy" id="31234"/>
    <lineage>
        <taxon>Eukaryota</taxon>
        <taxon>Metazoa</taxon>
        <taxon>Ecdysozoa</taxon>
        <taxon>Nematoda</taxon>
        <taxon>Chromadorea</taxon>
        <taxon>Rhabditida</taxon>
        <taxon>Rhabditina</taxon>
        <taxon>Rhabditomorpha</taxon>
        <taxon>Rhabditoidea</taxon>
        <taxon>Rhabditidae</taxon>
        <taxon>Peloderinae</taxon>
        <taxon>Caenorhabditis</taxon>
    </lineage>
</organism>
<sequence length="508" mass="57415">MMRQDRRNLLERNILVFSNKLQSEQILEVLIAKQILNADNGDVINSCRTERDKRKEIVKAVQRRGDVAFDAFYDALRDTGHHELAAVLEPLARTIDFITPRDLECPMSPASHRRSRALSPSTFSSPTRVHRDSVSSVSSFTSTYQDVYTRARSTSRSSRPLHASDRHNYVSPSNSFQSQPSSANSSFTGCSSLGYSSSRTRSYSKASAHSQYIFHEEDMNYVDAPTIHRVFDEKTMYRNFSTPRGLCLIINNEHFEQMPTRNGTKADKDNISNLFRCMGYIVHCKDNLTGRAMMLTIRDFAKNETHGDSAILVILSHGEENVIIGVDDVSVNVHEIYDLLNAANAPRLANKPKLVFVQACRGERRDNGFPVLDSVDGVPALIRPRGWDKGDGPLFNFLGCVRPQAQQVWRKKPSQADILIAYATTAQYVSWRNSARGSWFIQAVCEVFSLHAKDMDVVELLTEVNKKVACGFQTSQGANILKQMPELTSRLLKKFYFWPEDRNRSSAV</sequence>